<proteinExistence type="evidence at protein level"/>
<accession>Q9WYC5</accession>
<accession>G4FHK3</accession>
<gene>
    <name evidence="1" type="primary">pfp</name>
    <name type="ordered locus">TM_0289</name>
    <name type="ORF">THEMA_03280</name>
    <name type="ORF">Tmari_0287</name>
</gene>
<keyword id="KW-0963">Cytoplasm</keyword>
<keyword id="KW-0324">Glycolysis</keyword>
<keyword id="KW-0418">Kinase</keyword>
<keyword id="KW-0460">Magnesium</keyword>
<keyword id="KW-0479">Metal-binding</keyword>
<keyword id="KW-1185">Reference proteome</keyword>
<keyword id="KW-0808">Transferase</keyword>
<comment type="function">
    <text evidence="1 2">Catalyzes the phosphorylation of D-fructose 6-phosphate, the first committing step of glycolysis. Uses inorganic phosphate (PPi) as phosphoryl donor instead of ATP like common ATP-dependent phosphofructokinases (ATP-PFKs), which renders the reaction reversible, and can thus function both in glycolysis and gluconeogenesis. Consistently, PPi-PFK can replace the enzymes of both the forward (ATP-PFK) and reverse (fructose-bisphosphatase (FBPase)) reactions.</text>
</comment>
<comment type="catalytic activity">
    <reaction evidence="1 2">
        <text>beta-D-fructose 6-phosphate + diphosphate = beta-D-fructose 1,6-bisphosphate + phosphate + H(+)</text>
        <dbReference type="Rhea" id="RHEA:13613"/>
        <dbReference type="ChEBI" id="CHEBI:15378"/>
        <dbReference type="ChEBI" id="CHEBI:32966"/>
        <dbReference type="ChEBI" id="CHEBI:33019"/>
        <dbReference type="ChEBI" id="CHEBI:43474"/>
        <dbReference type="ChEBI" id="CHEBI:57634"/>
        <dbReference type="EC" id="2.7.1.90"/>
    </reaction>
</comment>
<comment type="cofactor">
    <cofactor evidence="1 2">
        <name>Mg(2+)</name>
        <dbReference type="ChEBI" id="CHEBI:18420"/>
    </cofactor>
    <cofactor evidence="1 2">
        <name>Co(2+)</name>
        <dbReference type="ChEBI" id="CHEBI:48828"/>
    </cofactor>
    <cofactor evidence="1 2">
        <name>Mn(2+)</name>
        <dbReference type="ChEBI" id="CHEBI:29035"/>
    </cofactor>
    <cofactor evidence="1 2">
        <name>Ni(2+)</name>
        <dbReference type="ChEBI" id="CHEBI:49786"/>
    </cofactor>
    <text evidence="1 2">Mg(2+) can be partially replaced by Co(2+), Mn(2+) and Ni(2+).</text>
</comment>
<comment type="activity regulation">
    <text evidence="1 2">Non-allosteric.</text>
</comment>
<comment type="biophysicochemical properties">
    <kinetics>
        <KM evidence="2">0.067 mM for diphosphate</KM>
        <KM evidence="2">0.01 mM for tripolyphosphate</KM>
        <KM evidence="2">0.0038 mM for polyphosphate</KM>
        <KM evidence="2">0.98 mM for fructose 6-phosphate</KM>
        <Vmax evidence="2">203.0 umol/min/mg enzyme with diphosphate as substrate</Vmax>
        <Vmax evidence="2">249.0 umol/min/mg enzyme with triphosphate as substrate</Vmax>
        <Vmax evidence="2">319.0 umol/min/mg enzyme with polyphosphate as substrate</Vmax>
    </kinetics>
    <phDependence>
        <text evidence="2">Optimum pH is 5.6-5.8 for the forward reaction, and 5.6-6.8 for the reverse reaction.</text>
    </phDependence>
</comment>
<comment type="pathway">
    <text evidence="1">Carbohydrate degradation; glycolysis; D-glyceraldehyde 3-phosphate and glycerone phosphate from D-glucose: step 3/4.</text>
</comment>
<comment type="subunit">
    <text evidence="1 2">Homodimer.</text>
</comment>
<comment type="subcellular location">
    <subcellularLocation>
        <location evidence="1">Cytoplasm</location>
    </subcellularLocation>
</comment>
<comment type="similarity">
    <text evidence="1">Belongs to the phosphofructokinase type A (PFKA) family. PPi-dependent PFK group II subfamily. Clade 'Short' sub-subfamily.</text>
</comment>
<evidence type="ECO:0000255" key="1">
    <source>
        <dbReference type="HAMAP-Rule" id="MF_01979"/>
    </source>
</evidence>
<evidence type="ECO:0000269" key="2">
    <source>
    </source>
</evidence>
<dbReference type="EC" id="2.7.1.90" evidence="1"/>
<dbReference type="EMBL" id="AE000512">
    <property type="protein sequence ID" value="AAD35377.1"/>
    <property type="molecule type" value="Genomic_DNA"/>
</dbReference>
<dbReference type="EMBL" id="CP004077">
    <property type="protein sequence ID" value="AGL49213.1"/>
    <property type="molecule type" value="Genomic_DNA"/>
</dbReference>
<dbReference type="EMBL" id="CP007013">
    <property type="protein sequence ID" value="AHD17947.1"/>
    <property type="molecule type" value="Genomic_DNA"/>
</dbReference>
<dbReference type="PIR" id="G72396">
    <property type="entry name" value="G72396"/>
</dbReference>
<dbReference type="RefSeq" id="NP_228101.1">
    <property type="nucleotide sequence ID" value="NC_000853.1"/>
</dbReference>
<dbReference type="RefSeq" id="WP_004083005.1">
    <property type="nucleotide sequence ID" value="NZ_CP011107.1"/>
</dbReference>
<dbReference type="SMR" id="Q9WYC5"/>
<dbReference type="STRING" id="243274.TM_0289"/>
<dbReference type="PaxDb" id="243274-THEMA_03280"/>
<dbReference type="EnsemblBacteria" id="AAD35377">
    <property type="protein sequence ID" value="AAD35377"/>
    <property type="gene ID" value="TM_0289"/>
</dbReference>
<dbReference type="KEGG" id="tma:TM0289"/>
<dbReference type="KEGG" id="tmi:THEMA_03280"/>
<dbReference type="KEGG" id="tmm:Tmari_0287"/>
<dbReference type="KEGG" id="tmw:THMA_0296"/>
<dbReference type="PATRIC" id="fig|243274.17.peg.286"/>
<dbReference type="eggNOG" id="COG0205">
    <property type="taxonomic scope" value="Bacteria"/>
</dbReference>
<dbReference type="InParanoid" id="Q9WYC5"/>
<dbReference type="OrthoDB" id="9802503at2"/>
<dbReference type="UniPathway" id="UPA00109">
    <property type="reaction ID" value="UER00182"/>
</dbReference>
<dbReference type="Proteomes" id="UP000008183">
    <property type="component" value="Chromosome"/>
</dbReference>
<dbReference type="GO" id="GO:0005737">
    <property type="term" value="C:cytoplasm"/>
    <property type="evidence" value="ECO:0007669"/>
    <property type="project" value="UniProtKB-SubCell"/>
</dbReference>
<dbReference type="GO" id="GO:0003872">
    <property type="term" value="F:6-phosphofructokinase activity"/>
    <property type="evidence" value="ECO:0007669"/>
    <property type="project" value="UniProtKB-UniRule"/>
</dbReference>
<dbReference type="GO" id="GO:0047334">
    <property type="term" value="F:diphosphate-fructose-6-phosphate 1-phosphotransferase activity"/>
    <property type="evidence" value="ECO:0007669"/>
    <property type="project" value="UniProtKB-EC"/>
</dbReference>
<dbReference type="GO" id="GO:0046872">
    <property type="term" value="F:metal ion binding"/>
    <property type="evidence" value="ECO:0007669"/>
    <property type="project" value="UniProtKB-KW"/>
</dbReference>
<dbReference type="GO" id="GO:0008443">
    <property type="term" value="F:phosphofructokinase activity"/>
    <property type="evidence" value="ECO:0000318"/>
    <property type="project" value="GO_Central"/>
</dbReference>
<dbReference type="GO" id="GO:0006002">
    <property type="term" value="P:fructose 6-phosphate metabolic process"/>
    <property type="evidence" value="ECO:0007669"/>
    <property type="project" value="InterPro"/>
</dbReference>
<dbReference type="GO" id="GO:0009749">
    <property type="term" value="P:response to glucose"/>
    <property type="evidence" value="ECO:0000318"/>
    <property type="project" value="GO_Central"/>
</dbReference>
<dbReference type="FunFam" id="3.40.50.450:FF:000039">
    <property type="entry name" value="Pyrophosphate--fructose 6-phosphate 1-phosphotransferase"/>
    <property type="match status" value="1"/>
</dbReference>
<dbReference type="FunFam" id="3.40.50.460:FF:000017">
    <property type="entry name" value="Pyrophosphate--fructose 6-phosphate 1-phosphotransferase"/>
    <property type="match status" value="1"/>
</dbReference>
<dbReference type="Gene3D" id="3.40.50.450">
    <property type="match status" value="1"/>
</dbReference>
<dbReference type="Gene3D" id="3.40.50.460">
    <property type="entry name" value="Phosphofructokinase domain"/>
    <property type="match status" value="1"/>
</dbReference>
<dbReference type="HAMAP" id="MF_01979">
    <property type="entry name" value="Phosphofructokinase_II_Short"/>
    <property type="match status" value="1"/>
</dbReference>
<dbReference type="InterPro" id="IPR022953">
    <property type="entry name" value="ATP_PFK"/>
</dbReference>
<dbReference type="InterPro" id="IPR054846">
    <property type="entry name" value="PFKA_PPi_Ttgales"/>
</dbReference>
<dbReference type="InterPro" id="IPR000023">
    <property type="entry name" value="Phosphofructokinase_dom"/>
</dbReference>
<dbReference type="InterPro" id="IPR035966">
    <property type="entry name" value="PKF_sf"/>
</dbReference>
<dbReference type="InterPro" id="IPR011403">
    <property type="entry name" value="PPi-PFK_TM0289"/>
</dbReference>
<dbReference type="NCBIfam" id="NF041103">
    <property type="entry name" value="PFKA_PPi_Ttgales"/>
    <property type="match status" value="1"/>
</dbReference>
<dbReference type="PANTHER" id="PTHR43650">
    <property type="entry name" value="PYROPHOSPHATE--FRUCTOSE 6-PHOSPHATE 1-PHOSPHOTRANSFERASE"/>
    <property type="match status" value="1"/>
</dbReference>
<dbReference type="PANTHER" id="PTHR43650:SF1">
    <property type="entry name" value="PYROPHOSPHATE--FRUCTOSE 6-PHOSPHATE 1-PHOSPHOTRANSFERASE SUBUNIT BETA 2"/>
    <property type="match status" value="1"/>
</dbReference>
<dbReference type="Pfam" id="PF00365">
    <property type="entry name" value="PFK"/>
    <property type="match status" value="1"/>
</dbReference>
<dbReference type="PIRSF" id="PIRSF036482">
    <property type="entry name" value="PPi_PFK_TM0289"/>
    <property type="match status" value="1"/>
</dbReference>
<dbReference type="PRINTS" id="PR00476">
    <property type="entry name" value="PHFRCTKINASE"/>
</dbReference>
<dbReference type="SUPFAM" id="SSF53784">
    <property type="entry name" value="Phosphofructokinase"/>
    <property type="match status" value="1"/>
</dbReference>
<sequence>MAERLGILVGGGPAPGINSVISSVTIEAINNGLEVIGIYDGFKHLVEGKTNMVKKLSIEDVSRIHIEGGSILRTSRVNPAKSEETLEKTVQTLKKLGIKYLVTIGGDDTAFSASKVCERSKGEIKVVHVPKTIDNDLPLPENMPTFGFETARHVATELVYNLMQDSRTTNRWYFVAMMGREAGHLALGVGKAASATITIIPEEFKEGVTLEEVCDVLDGAILKRKLMGRDDGVAVIGEGIAEKMDPEELANIPGVIVEKDPHGHLRLAEIPLATILKRAIERRYAERGERIHIVDVTIGYELRSARPIPFDIVYTRTLGYGAVRFLLGDYSDLPGGMVCVVGGRIKILPFDAFMDPKTGRTKVRVVDVRSEDYRVARKYMIRLEKKDLEDPETLEKLAKLAKMEPEEFKKKYWHTTELP</sequence>
<organism>
    <name type="scientific">Thermotoga maritima (strain ATCC 43589 / DSM 3109 / JCM 10099 / NBRC 100826 / MSB8)</name>
    <dbReference type="NCBI Taxonomy" id="243274"/>
    <lineage>
        <taxon>Bacteria</taxon>
        <taxon>Thermotogati</taxon>
        <taxon>Thermotogota</taxon>
        <taxon>Thermotogae</taxon>
        <taxon>Thermotogales</taxon>
        <taxon>Thermotogaceae</taxon>
        <taxon>Thermotoga</taxon>
    </lineage>
</organism>
<feature type="chain" id="PRO_0000429700" description="Pyrophosphate--fructose 6-phosphate 1-phosphotransferase">
    <location>
        <begin position="1"/>
        <end position="419"/>
    </location>
</feature>
<feature type="active site" description="Proton acceptor" evidence="1">
    <location>
        <position position="134"/>
    </location>
</feature>
<feature type="binding site" evidence="1">
    <location>
        <position position="12"/>
    </location>
    <ligand>
        <name>diphosphate</name>
        <dbReference type="ChEBI" id="CHEBI:33019"/>
    </ligand>
</feature>
<feature type="binding site" evidence="1">
    <location>
        <position position="107"/>
    </location>
    <ligand>
        <name>Mg(2+)</name>
        <dbReference type="ChEBI" id="CHEBI:18420"/>
        <note>catalytic</note>
    </ligand>
</feature>
<feature type="binding site" evidence="1">
    <location>
        <begin position="132"/>
        <end position="134"/>
    </location>
    <ligand>
        <name>substrate</name>
    </ligand>
</feature>
<feature type="binding site" evidence="1">
    <location>
        <begin position="178"/>
        <end position="180"/>
    </location>
    <ligand>
        <name>substrate</name>
    </ligand>
</feature>
<feature type="binding site" evidence="1">
    <location>
        <position position="238"/>
    </location>
    <ligand>
        <name>substrate</name>
    </ligand>
</feature>
<feature type="binding site" evidence="1">
    <location>
        <begin position="300"/>
        <end position="303"/>
    </location>
    <ligand>
        <name>substrate</name>
    </ligand>
</feature>
<feature type="site" description="Important for catalytic activity and substrate specificity; stabilizes the transition state when the phosphoryl donor is PPi; prevents ATP from binding by mimicking the alpha-phosphate group of ATP" evidence="1">
    <location>
        <position position="108"/>
    </location>
</feature>
<feature type="site" description="Important for catalytic activity; stabilizes the transition state when the phosphoryl donor is PPi" evidence="1">
    <location>
        <position position="131"/>
    </location>
</feature>
<reference key="1">
    <citation type="journal article" date="1999" name="Nature">
        <title>Evidence for lateral gene transfer between Archaea and Bacteria from genome sequence of Thermotoga maritima.</title>
        <authorList>
            <person name="Nelson K.E."/>
            <person name="Clayton R.A."/>
            <person name="Gill S.R."/>
            <person name="Gwinn M.L."/>
            <person name="Dodson R.J."/>
            <person name="Haft D.H."/>
            <person name="Hickey E.K."/>
            <person name="Peterson J.D."/>
            <person name="Nelson W.C."/>
            <person name="Ketchum K.A."/>
            <person name="McDonald L.A."/>
            <person name="Utterback T.R."/>
            <person name="Malek J.A."/>
            <person name="Linher K.D."/>
            <person name="Garrett M.M."/>
            <person name="Stewart A.M."/>
            <person name="Cotton M.D."/>
            <person name="Pratt M.S."/>
            <person name="Phillips C.A."/>
            <person name="Richardson D.L."/>
            <person name="Heidelberg J.F."/>
            <person name="Sutton G.G."/>
            <person name="Fleischmann R.D."/>
            <person name="Eisen J.A."/>
            <person name="White O."/>
            <person name="Salzberg S.L."/>
            <person name="Smith H.O."/>
            <person name="Venter J.C."/>
            <person name="Fraser C.M."/>
        </authorList>
    </citation>
    <scope>NUCLEOTIDE SEQUENCE [LARGE SCALE GENOMIC DNA]</scope>
    <source>
        <strain>ATCC 43589 / DSM 3109 / JCM 10099 / NBRC 100826 / MSB8</strain>
    </source>
</reference>
<reference key="2">
    <citation type="journal article" date="2013" name="PLoS Genet.">
        <title>The genome organization of Thermotoga maritima reflects its lifestyle.</title>
        <authorList>
            <person name="Latif H."/>
            <person name="Lerman J.A."/>
            <person name="Portnoy V.A."/>
            <person name="Tarasova Y."/>
            <person name="Nagarajan H."/>
            <person name="Schrimpe-Rutledge A.C."/>
            <person name="Smith R.D."/>
            <person name="Adkins J.N."/>
            <person name="Lee D.H."/>
            <person name="Qiu Y."/>
            <person name="Zengler K."/>
        </authorList>
    </citation>
    <scope>NUCLEOTIDE SEQUENCE [LARGE SCALE GENOMIC DNA]</scope>
    <source>
        <strain>ATCC 43589 / DSM 3109 / JCM 10099 / NBRC 100826 / MSB8</strain>
    </source>
</reference>
<reference key="3">
    <citation type="submission" date="2013-12" db="EMBL/GenBank/DDBJ databases">
        <authorList>
            <consortium name="DOE Joint Genome Institute"/>
            <person name="Noll K.M."/>
            <person name="Huntemann M."/>
            <person name="Han J."/>
            <person name="Chen A."/>
            <person name="Kyrpides N."/>
            <person name="Mavromatis K."/>
            <person name="Markowitz V."/>
            <person name="Palaniappan K."/>
            <person name="Ivanova N."/>
            <person name="Schaumberg A."/>
            <person name="Pati A."/>
            <person name="Liolios K."/>
            <person name="Nordberg H.P."/>
            <person name="Cantor M.N."/>
            <person name="Hua S.X."/>
            <person name="Woyke T."/>
        </authorList>
    </citation>
    <scope>NUCLEOTIDE SEQUENCE [LARGE SCALE GENOMIC DNA]</scope>
    <source>
        <strain>ATCC 43589 / DSM 3109 / JCM 10099 / NBRC 100826 / MSB8</strain>
    </source>
</reference>
<reference key="4">
    <citation type="journal article" date="2001" name="J. Bacteriol.">
        <title>Thermotoga maritima phosphofructokinases: expression and characterization of two unique enzymes.</title>
        <authorList>
            <person name="Ding Y.R."/>
            <person name="Ronimus R.S."/>
            <person name="Morgan H.W."/>
        </authorList>
    </citation>
    <scope>FUNCTION</scope>
    <scope>CATALYTIC ACTIVITY</scope>
    <scope>BIOPHYSICOCHEMICAL PROPERTIES</scope>
    <scope>SUBUNIT</scope>
    <scope>COFACTOR</scope>
    <scope>ACTIVITY REGULATION</scope>
    <source>
        <strain>ATCC 43589 / DSM 3109 / JCM 10099 / NBRC 100826 / MSB8</strain>
    </source>
</reference>
<name>PFP_THEMA</name>
<protein>
    <recommendedName>
        <fullName evidence="1">Pyrophosphate--fructose 6-phosphate 1-phosphotransferase</fullName>
        <ecNumber evidence="1">2.7.1.90</ecNumber>
    </recommendedName>
    <alternativeName>
        <fullName evidence="1">6-phosphofructokinase, pyrophosphate dependent</fullName>
    </alternativeName>
    <alternativeName>
        <fullName evidence="1">PPi-dependent phosphofructokinase</fullName>
        <shortName evidence="1">PPi-PFK</shortName>
    </alternativeName>
    <alternativeName>
        <fullName evidence="1">Pyrophosphate-dependent 6-phosphofructose-1-kinase</fullName>
    </alternativeName>
</protein>